<proteinExistence type="evidence at transcript level"/>
<keyword id="KW-0052">Apoplast</keyword>
<keyword id="KW-0221">Differentiation</keyword>
<keyword id="KW-0325">Glycoprotein</keyword>
<keyword id="KW-1035">Host cytoplasm</keyword>
<keyword id="KW-1185">Reference proteome</keyword>
<keyword id="KW-0677">Repeat</keyword>
<keyword id="KW-0964">Secreted</keyword>
<keyword id="KW-0732">Signal</keyword>
<evidence type="ECO:0000250" key="1"/>
<evidence type="ECO:0000255" key="2"/>
<evidence type="ECO:0000255" key="3">
    <source>
        <dbReference type="PROSITE-ProRule" id="PRU00498"/>
    </source>
</evidence>
<evidence type="ECO:0000256" key="4">
    <source>
        <dbReference type="SAM" id="MobiDB-lite"/>
    </source>
</evidence>
<evidence type="ECO:0000269" key="5">
    <source>
    </source>
</evidence>
<evidence type="ECO:0000305" key="6"/>
<name>CL4A3_GLORO</name>
<protein>
    <recommendedName>
        <fullName>CLAVATA3/ESR (CLE)-related protein 4A-3</fullName>
    </recommendedName>
</protein>
<reference key="1">
    <citation type="journal article" date="2009" name="Mol. Plant Microbe Interact.">
        <title>Structural and functional diversity of CLAVATA3/ESR (CLE)-like genes from the potato cyst nematode Globodera rostochiensis.</title>
        <authorList>
            <person name="Lu S.-W."/>
            <person name="Chen S."/>
            <person name="Wang J."/>
            <person name="Yu H."/>
            <person name="Chronis D."/>
            <person name="Mitchum M.G."/>
            <person name="Wang X."/>
        </authorList>
    </citation>
    <scope>NUCLEOTIDE SEQUENCE [GENOMIC DNA / MRNA]</scope>
    <scope>FUNCTION</scope>
    <scope>TISSUE SPECIFICITY</scope>
    <scope>DEVELOPMENTAL STAGE</scope>
</reference>
<comment type="function">
    <text evidence="5">Mimics host plant CLE extracellular signal peptides that regulate cell fate. May play a role in the differentiation or division of feeding cells (syncytia) induced in plant roots during infection.</text>
</comment>
<comment type="subcellular location">
    <subcellularLocation>
        <location evidence="1">Secreted</location>
    </subcellularLocation>
    <subcellularLocation>
        <location evidence="1">Host cytoplasm</location>
    </subcellularLocation>
    <subcellularLocation>
        <location evidence="1">Host extracellular space</location>
    </subcellularLocation>
    <subcellularLocation>
        <location evidence="1">Secreted</location>
        <location evidence="1">Extracellular space</location>
        <location evidence="1">Apoplast</location>
    </subcellularLocation>
    <text evidence="1">Present in secretory granules within the dorsal esophageal gland secretory cell and in the dorsal gland ampulla (collecting reservoir) at the base of the nematode stylet. Secreted into host root cells via the nematode stylet to transform the recipient cells into enlarged multinucleate feeding cells called giant-cells or syncytia. Secreted to the host apoplasm from its cytoplasm via a plant secretory pathway (By similarity).</text>
</comment>
<comment type="tissue specificity">
    <text evidence="5">Highly expressed exclusively within the dorsal esophageal gland cell during syncytium formation in host plants.</text>
</comment>
<comment type="developmental stage">
    <text evidence="5">Strongly up-regulated during root colonization, from the onset of syncytium formation by parasitic second-stage juveniles (pJ2) through the J3?J4 molts of sedentary life stages that become adult females.</text>
</comment>
<comment type="similarity">
    <text evidence="6">Belongs to the CLV3/ESR signal peptide family.</text>
</comment>
<gene>
    <name type="primary">CLE-4A-3</name>
</gene>
<dbReference type="EMBL" id="EU386833">
    <property type="protein sequence ID" value="ACY70452.1"/>
    <property type="molecule type" value="mRNA"/>
</dbReference>
<dbReference type="EMBL" id="EU386840">
    <property type="protein sequence ID" value="ACY70459.1"/>
    <property type="molecule type" value="Genomic_DNA"/>
</dbReference>
<dbReference type="GlyCosmos" id="D1FNK8">
    <property type="glycosylation" value="1 site, No reported glycans"/>
</dbReference>
<dbReference type="Proteomes" id="UP000887572">
    <property type="component" value="Unplaced"/>
</dbReference>
<dbReference type="GO" id="GO:0005576">
    <property type="term" value="C:extracellular region"/>
    <property type="evidence" value="ECO:0007669"/>
    <property type="project" value="UniProtKB-SubCell"/>
</dbReference>
<dbReference type="GO" id="GO:0030430">
    <property type="term" value="C:host cell cytoplasm"/>
    <property type="evidence" value="ECO:0007669"/>
    <property type="project" value="UniProtKB-SubCell"/>
</dbReference>
<dbReference type="GO" id="GO:0043655">
    <property type="term" value="C:host extracellular space"/>
    <property type="evidence" value="ECO:0007669"/>
    <property type="project" value="UniProtKB-SubCell"/>
</dbReference>
<dbReference type="GO" id="GO:0033612">
    <property type="term" value="F:receptor serine/threonine kinase binding"/>
    <property type="evidence" value="ECO:0007669"/>
    <property type="project" value="InterPro"/>
</dbReference>
<dbReference type="GO" id="GO:0030154">
    <property type="term" value="P:cell differentiation"/>
    <property type="evidence" value="ECO:0007669"/>
    <property type="project" value="UniProtKB-KW"/>
</dbReference>
<dbReference type="InterPro" id="IPR044962">
    <property type="entry name" value="CLV3/ESR"/>
</dbReference>
<dbReference type="PANTHER" id="PTHR36349">
    <property type="entry name" value="PROTEIN CLAVATA 3"/>
    <property type="match status" value="1"/>
</dbReference>
<dbReference type="PANTHER" id="PTHR36349:SF2">
    <property type="entry name" value="PROTEIN CLAVATA 3"/>
    <property type="match status" value="1"/>
</dbReference>
<sequence>MAKNAMLCLLILRVVLALAFATNKKGDEEPENHSTGIFGKVGRVVTVALAMSSRLGGADATRGGGAVYGGNLKSNQLPNNNWMAPPPPMAIRSAKVYDSKHSPAEYLKKFAQDFRRKTGMHSQRHHEETTLEQEKRVAGAGPDPIHHQDTTLEQEKRAVPAGPDPKHHEETTLEQEKRAVPAGPDPKHHEDTTLEQEKRGAPAGPDPIHH</sequence>
<organism>
    <name type="scientific">Globodera rostochiensis</name>
    <name type="common">Golden nematode worm</name>
    <name type="synonym">Heterodera rostochiensis</name>
    <dbReference type="NCBI Taxonomy" id="31243"/>
    <lineage>
        <taxon>Eukaryota</taxon>
        <taxon>Metazoa</taxon>
        <taxon>Ecdysozoa</taxon>
        <taxon>Nematoda</taxon>
        <taxon>Chromadorea</taxon>
        <taxon>Rhabditida</taxon>
        <taxon>Tylenchina</taxon>
        <taxon>Tylenchomorpha</taxon>
        <taxon>Tylenchoidea</taxon>
        <taxon>Heteroderidae</taxon>
        <taxon>Heteroderinae</taxon>
        <taxon>Globodera</taxon>
    </lineage>
</organism>
<feature type="signal peptide" evidence="2">
    <location>
        <begin position="1"/>
        <end position="21"/>
    </location>
</feature>
<feature type="chain" id="PRO_5000539268" description="CLAVATA3/ESR (CLE)-related protein 4A-3" evidence="2">
    <location>
        <begin position="22"/>
        <end position="210"/>
    </location>
</feature>
<feature type="repeat" description="A-1">
    <location>
        <begin position="127"/>
        <end position="135"/>
    </location>
</feature>
<feature type="repeat" description="CLE-1">
    <location>
        <begin position="136"/>
        <end position="147"/>
    </location>
</feature>
<feature type="repeat" description="A-2">
    <location>
        <begin position="148"/>
        <end position="156"/>
    </location>
</feature>
<feature type="repeat" description="CLE-2">
    <location>
        <begin position="157"/>
        <end position="168"/>
    </location>
</feature>
<feature type="repeat" description="A-3">
    <location>
        <begin position="169"/>
        <end position="177"/>
    </location>
</feature>
<feature type="repeat" description="CLE-3">
    <location>
        <begin position="178"/>
        <end position="189"/>
    </location>
</feature>
<feature type="repeat" description="A-4">
    <location>
        <begin position="190"/>
        <end position="198"/>
    </location>
</feature>
<feature type="repeat" description="CLE-4">
    <location>
        <begin position="199"/>
        <end position="210"/>
    </location>
</feature>
<feature type="region of interest" description="Required for secretion from the host cytoplasm to the host apoplasm" evidence="1">
    <location>
        <begin position="21"/>
        <end position="83"/>
    </location>
</feature>
<feature type="region of interest" description="Disordered" evidence="4">
    <location>
        <begin position="116"/>
        <end position="210"/>
    </location>
</feature>
<feature type="region of interest" description="4 X approximate repeat A">
    <location>
        <begin position="127"/>
        <end position="198"/>
    </location>
</feature>
<feature type="region of interest" description="4 X approximate repeat CLE">
    <location>
        <begin position="136"/>
        <end position="210"/>
    </location>
</feature>
<feature type="compositionally biased region" description="Basic and acidic residues" evidence="4">
    <location>
        <begin position="125"/>
        <end position="137"/>
    </location>
</feature>
<feature type="compositionally biased region" description="Basic and acidic residues" evidence="4">
    <location>
        <begin position="144"/>
        <end position="200"/>
    </location>
</feature>
<feature type="glycosylation site" description="N-linked (GlcNAc...) asparagine" evidence="3">
    <location>
        <position position="32"/>
    </location>
</feature>
<accession>D1FNK8</accession>